<proteinExistence type="inferred from homology"/>
<keyword id="KW-0007">Acetylation</keyword>
<keyword id="KW-0067">ATP-binding</keyword>
<keyword id="KW-0436">Ligase</keyword>
<keyword id="KW-0460">Magnesium</keyword>
<keyword id="KW-0479">Metal-binding</keyword>
<keyword id="KW-0547">Nucleotide-binding</keyword>
<protein>
    <recommendedName>
        <fullName evidence="1">Acetyl-coenzyme A synthetase</fullName>
        <shortName evidence="1">AcCoA synthetase</shortName>
        <shortName evidence="1">Acs</shortName>
        <ecNumber evidence="1">6.2.1.1</ecNumber>
    </recommendedName>
    <alternativeName>
        <fullName evidence="1">Acetate--CoA ligase</fullName>
    </alternativeName>
    <alternativeName>
        <fullName evidence="1">Acyl-activating enzyme</fullName>
    </alternativeName>
</protein>
<accession>A9KY56</accession>
<comment type="function">
    <text evidence="1">Catalyzes the conversion of acetate into acetyl-CoA (AcCoA), an essential intermediate at the junction of anabolic and catabolic pathways. AcsA undergoes a two-step reaction. In the first half reaction, AcsA combines acetate with ATP to form acetyl-adenylate (AcAMP) intermediate. In the second half reaction, it can then transfer the acetyl group from AcAMP to the sulfhydryl group of CoA, forming the product AcCoA.</text>
</comment>
<comment type="catalytic activity">
    <reaction evidence="1">
        <text>acetate + ATP + CoA = acetyl-CoA + AMP + diphosphate</text>
        <dbReference type="Rhea" id="RHEA:23176"/>
        <dbReference type="ChEBI" id="CHEBI:30089"/>
        <dbReference type="ChEBI" id="CHEBI:30616"/>
        <dbReference type="ChEBI" id="CHEBI:33019"/>
        <dbReference type="ChEBI" id="CHEBI:57287"/>
        <dbReference type="ChEBI" id="CHEBI:57288"/>
        <dbReference type="ChEBI" id="CHEBI:456215"/>
        <dbReference type="EC" id="6.2.1.1"/>
    </reaction>
</comment>
<comment type="cofactor">
    <cofactor evidence="1">
        <name>Mg(2+)</name>
        <dbReference type="ChEBI" id="CHEBI:18420"/>
    </cofactor>
</comment>
<comment type="PTM">
    <text evidence="1">Acetylated. Deacetylation by the SIR2-homolog deacetylase activates the enzyme.</text>
</comment>
<comment type="similarity">
    <text evidence="1">Belongs to the ATP-dependent AMP-binding enzyme family.</text>
</comment>
<dbReference type="EC" id="6.2.1.1" evidence="1"/>
<dbReference type="EMBL" id="CP000891">
    <property type="protein sequence ID" value="ABX48962.1"/>
    <property type="molecule type" value="Genomic_DNA"/>
</dbReference>
<dbReference type="SMR" id="A9KY56"/>
<dbReference type="KEGG" id="sbn:Sbal195_1791"/>
<dbReference type="HOGENOM" id="CLU_000022_3_6_6"/>
<dbReference type="Proteomes" id="UP000000770">
    <property type="component" value="Chromosome"/>
</dbReference>
<dbReference type="GO" id="GO:0005829">
    <property type="term" value="C:cytosol"/>
    <property type="evidence" value="ECO:0007669"/>
    <property type="project" value="TreeGrafter"/>
</dbReference>
<dbReference type="GO" id="GO:0003987">
    <property type="term" value="F:acetate-CoA ligase activity"/>
    <property type="evidence" value="ECO:0007669"/>
    <property type="project" value="UniProtKB-UniRule"/>
</dbReference>
<dbReference type="GO" id="GO:0016208">
    <property type="term" value="F:AMP binding"/>
    <property type="evidence" value="ECO:0007669"/>
    <property type="project" value="InterPro"/>
</dbReference>
<dbReference type="GO" id="GO:0005524">
    <property type="term" value="F:ATP binding"/>
    <property type="evidence" value="ECO:0007669"/>
    <property type="project" value="UniProtKB-KW"/>
</dbReference>
<dbReference type="GO" id="GO:0046872">
    <property type="term" value="F:metal ion binding"/>
    <property type="evidence" value="ECO:0007669"/>
    <property type="project" value="UniProtKB-KW"/>
</dbReference>
<dbReference type="GO" id="GO:0019427">
    <property type="term" value="P:acetyl-CoA biosynthetic process from acetate"/>
    <property type="evidence" value="ECO:0007669"/>
    <property type="project" value="InterPro"/>
</dbReference>
<dbReference type="CDD" id="cd05966">
    <property type="entry name" value="ACS"/>
    <property type="match status" value="1"/>
</dbReference>
<dbReference type="FunFam" id="3.30.300.30:FF:000004">
    <property type="entry name" value="Acetyl-coenzyme A synthetase"/>
    <property type="match status" value="1"/>
</dbReference>
<dbReference type="FunFam" id="3.40.50.12780:FF:000001">
    <property type="entry name" value="Acetyl-coenzyme A synthetase"/>
    <property type="match status" value="1"/>
</dbReference>
<dbReference type="Gene3D" id="3.30.300.30">
    <property type="match status" value="1"/>
</dbReference>
<dbReference type="Gene3D" id="3.40.50.12780">
    <property type="entry name" value="N-terminal domain of ligase-like"/>
    <property type="match status" value="1"/>
</dbReference>
<dbReference type="HAMAP" id="MF_01123">
    <property type="entry name" value="Ac_CoA_synth"/>
    <property type="match status" value="1"/>
</dbReference>
<dbReference type="InterPro" id="IPR011904">
    <property type="entry name" value="Ac_CoA_lig"/>
</dbReference>
<dbReference type="InterPro" id="IPR032387">
    <property type="entry name" value="ACAS_N"/>
</dbReference>
<dbReference type="InterPro" id="IPR025110">
    <property type="entry name" value="AMP-bd_C"/>
</dbReference>
<dbReference type="InterPro" id="IPR045851">
    <property type="entry name" value="AMP-bd_C_sf"/>
</dbReference>
<dbReference type="InterPro" id="IPR020845">
    <property type="entry name" value="AMP-binding_CS"/>
</dbReference>
<dbReference type="InterPro" id="IPR000873">
    <property type="entry name" value="AMP-dep_synth/lig_dom"/>
</dbReference>
<dbReference type="InterPro" id="IPR042099">
    <property type="entry name" value="ANL_N_sf"/>
</dbReference>
<dbReference type="NCBIfam" id="TIGR02188">
    <property type="entry name" value="Ac_CoA_lig_AcsA"/>
    <property type="match status" value="1"/>
</dbReference>
<dbReference type="NCBIfam" id="NF001208">
    <property type="entry name" value="PRK00174.1"/>
    <property type="match status" value="1"/>
</dbReference>
<dbReference type="PANTHER" id="PTHR24095">
    <property type="entry name" value="ACETYL-COENZYME A SYNTHETASE"/>
    <property type="match status" value="1"/>
</dbReference>
<dbReference type="PANTHER" id="PTHR24095:SF243">
    <property type="entry name" value="ACETYL-COENZYME A SYNTHETASE"/>
    <property type="match status" value="1"/>
</dbReference>
<dbReference type="Pfam" id="PF16177">
    <property type="entry name" value="ACAS_N"/>
    <property type="match status" value="1"/>
</dbReference>
<dbReference type="Pfam" id="PF00501">
    <property type="entry name" value="AMP-binding"/>
    <property type="match status" value="1"/>
</dbReference>
<dbReference type="Pfam" id="PF13193">
    <property type="entry name" value="AMP-binding_C"/>
    <property type="match status" value="1"/>
</dbReference>
<dbReference type="SUPFAM" id="SSF56801">
    <property type="entry name" value="Acetyl-CoA synthetase-like"/>
    <property type="match status" value="1"/>
</dbReference>
<dbReference type="PROSITE" id="PS00455">
    <property type="entry name" value="AMP_BINDING"/>
    <property type="match status" value="1"/>
</dbReference>
<organism>
    <name type="scientific">Shewanella baltica (strain OS195)</name>
    <dbReference type="NCBI Taxonomy" id="399599"/>
    <lineage>
        <taxon>Bacteria</taxon>
        <taxon>Pseudomonadati</taxon>
        <taxon>Pseudomonadota</taxon>
        <taxon>Gammaproteobacteria</taxon>
        <taxon>Alteromonadales</taxon>
        <taxon>Shewanellaceae</taxon>
        <taxon>Shewanella</taxon>
    </lineage>
</organism>
<evidence type="ECO:0000255" key="1">
    <source>
        <dbReference type="HAMAP-Rule" id="MF_01123"/>
    </source>
</evidence>
<reference key="1">
    <citation type="submission" date="2007-11" db="EMBL/GenBank/DDBJ databases">
        <title>Complete sequence of chromosome of Shewanella baltica OS195.</title>
        <authorList>
            <consortium name="US DOE Joint Genome Institute"/>
            <person name="Copeland A."/>
            <person name="Lucas S."/>
            <person name="Lapidus A."/>
            <person name="Barry K."/>
            <person name="Glavina del Rio T."/>
            <person name="Dalin E."/>
            <person name="Tice H."/>
            <person name="Pitluck S."/>
            <person name="Chain P."/>
            <person name="Malfatti S."/>
            <person name="Shin M."/>
            <person name="Vergez L."/>
            <person name="Schmutz J."/>
            <person name="Larimer F."/>
            <person name="Land M."/>
            <person name="Hauser L."/>
            <person name="Kyrpides N."/>
            <person name="Kim E."/>
            <person name="Brettar I."/>
            <person name="Rodrigues J."/>
            <person name="Konstantinidis K."/>
            <person name="Klappenbach J."/>
            <person name="Hofle M."/>
            <person name="Tiedje J."/>
            <person name="Richardson P."/>
        </authorList>
    </citation>
    <scope>NUCLEOTIDE SEQUENCE [LARGE SCALE GENOMIC DNA]</scope>
    <source>
        <strain>OS195</strain>
    </source>
</reference>
<sequence length="650" mass="72453">MSSQSLYKVSGNIAANALVNNDKYKTMYQESIVNPEGFWREHGKRIDWIKPYTKIKKTSFDDHNLSINWFYDGTLNASANCLDRHLAEHSDRVAIIWEGDNASEQRKITYGELHAEVCKFANALRSQGVRRGDIVTIYMPMVPEAAVAMLACARIGAVHSVVFGGFSPDSIASRVIDGKSKVIITSDEGMRGGRAIPLKRNIDDALKNPDVTTVEKVIVLKRTGGIVDWVEDRDVWWHSLMETASEYCQPEEMDAEAPLFLLYTSGSTGNPKGVLHTTGGYMVYASMTHEYVFDYKAGEVYWCTADVGWITGHSYMVYGPLANGATVLIHEGVPNHPSPARLGEMIDRHKVSILYTAPTLIRALMAEGKQHFDKFDGSSLRIMGSVGEPINPEAWRWYHEVIGHEHCPIVDTWWQTETGGILITPLPGATDTKPGSATRPFFGVQPALVDNMGNILEGENEGNLVLLDSWPGQMRTVYGDHERFVLTYFKTFRGMYFTGDGARRDEDGYYWITGRVDDVINVSGHRLGTAEVESALVSHELVAEAAVVGYPHDIKGQGIYAYVTLTRGTEETEELRQELRQWVRKEIGALATPDLIQWATGLPKTRSGKIMRRFLRKIAANEVTNLGDASTLADPAVIETLIESRLNRTE</sequence>
<name>ACSA_SHEB9</name>
<gene>
    <name evidence="1" type="primary">acsA</name>
    <name type="ordered locus">Sbal195_1791</name>
</gene>
<feature type="chain" id="PRO_1000085003" description="Acetyl-coenzyme A synthetase">
    <location>
        <begin position="1"/>
        <end position="650"/>
    </location>
</feature>
<feature type="binding site" evidence="1">
    <location>
        <begin position="191"/>
        <end position="194"/>
    </location>
    <ligand>
        <name>CoA</name>
        <dbReference type="ChEBI" id="CHEBI:57287"/>
    </ligand>
</feature>
<feature type="binding site" evidence="1">
    <location>
        <position position="311"/>
    </location>
    <ligand>
        <name>CoA</name>
        <dbReference type="ChEBI" id="CHEBI:57287"/>
    </ligand>
</feature>
<feature type="binding site" evidence="1">
    <location>
        <position position="335"/>
    </location>
    <ligand>
        <name>CoA</name>
        <dbReference type="ChEBI" id="CHEBI:57287"/>
    </ligand>
</feature>
<feature type="binding site" evidence="1">
    <location>
        <begin position="387"/>
        <end position="389"/>
    </location>
    <ligand>
        <name>ATP</name>
        <dbReference type="ChEBI" id="CHEBI:30616"/>
    </ligand>
</feature>
<feature type="binding site" evidence="1">
    <location>
        <begin position="411"/>
        <end position="416"/>
    </location>
    <ligand>
        <name>ATP</name>
        <dbReference type="ChEBI" id="CHEBI:30616"/>
    </ligand>
</feature>
<feature type="binding site" evidence="1">
    <location>
        <position position="500"/>
    </location>
    <ligand>
        <name>ATP</name>
        <dbReference type="ChEBI" id="CHEBI:30616"/>
    </ligand>
</feature>
<feature type="binding site" evidence="1">
    <location>
        <position position="515"/>
    </location>
    <ligand>
        <name>ATP</name>
        <dbReference type="ChEBI" id="CHEBI:30616"/>
    </ligand>
</feature>
<feature type="binding site" evidence="1">
    <location>
        <position position="523"/>
    </location>
    <ligand>
        <name>CoA</name>
        <dbReference type="ChEBI" id="CHEBI:57287"/>
    </ligand>
</feature>
<feature type="binding site" evidence="1">
    <location>
        <position position="526"/>
    </location>
    <ligand>
        <name>ATP</name>
        <dbReference type="ChEBI" id="CHEBI:30616"/>
    </ligand>
</feature>
<feature type="binding site" evidence="1">
    <location>
        <position position="537"/>
    </location>
    <ligand>
        <name>Mg(2+)</name>
        <dbReference type="ChEBI" id="CHEBI:18420"/>
    </ligand>
</feature>
<feature type="binding site" evidence="1">
    <location>
        <position position="539"/>
    </location>
    <ligand>
        <name>Mg(2+)</name>
        <dbReference type="ChEBI" id="CHEBI:18420"/>
    </ligand>
</feature>
<feature type="binding site" evidence="1">
    <location>
        <position position="542"/>
    </location>
    <ligand>
        <name>Mg(2+)</name>
        <dbReference type="ChEBI" id="CHEBI:18420"/>
    </ligand>
</feature>
<feature type="binding site" evidence="1">
    <location>
        <position position="584"/>
    </location>
    <ligand>
        <name>CoA</name>
        <dbReference type="ChEBI" id="CHEBI:57287"/>
    </ligand>
</feature>
<feature type="modified residue" description="N6-acetyllysine" evidence="1">
    <location>
        <position position="609"/>
    </location>
</feature>